<reference key="1">
    <citation type="journal article" date="2003" name="Gene Expr. Patterns">
        <title>Cloning and embryonic expression analysis of the mouse Gbx1 gene.</title>
        <authorList>
            <person name="Waters S.T."/>
            <person name="Wilson C.P."/>
            <person name="Lewandoski M."/>
        </authorList>
    </citation>
    <scope>NUCLEOTIDE SEQUENCE [MRNA]</scope>
    <scope>DEVELOPMENTAL STAGE</scope>
    <scope>TISSUE SPECIFICITY</scope>
    <source>
        <strain>C57BL/6 X C3H</strain>
    </source>
</reference>
<reference key="2">
    <citation type="journal article" date="2004" name="Dev. Dyn.">
        <title>Isolation and expression of the homeobox gene Gbx1 during mouse development.</title>
        <authorList>
            <person name="Rhinn M."/>
            <person name="Lun K."/>
            <person name="Werner M."/>
            <person name="Simeone A."/>
            <person name="Brand M."/>
        </authorList>
    </citation>
    <scope>NUCLEOTIDE SEQUENCE [MRNA]</scope>
</reference>
<reference key="3">
    <citation type="journal article" date="1991" name="Proc. Natl. Acad. Sci. U.S.A.">
        <title>Detection of homeobox genes in development and evolution.</title>
        <authorList>
            <person name="Murtha M.T."/>
            <person name="Leckman J.F."/>
            <person name="Ruddle F.H."/>
        </authorList>
    </citation>
    <scope>NUCLEOTIDE SEQUENCE [GENOMIC DNA] OF 337-361</scope>
    <source>
        <strain>C57BL/6J</strain>
        <tissue>Spleen</tissue>
    </source>
</reference>
<keyword id="KW-0238">DNA-binding</keyword>
<keyword id="KW-0371">Homeobox</keyword>
<keyword id="KW-0539">Nucleus</keyword>
<keyword id="KW-1185">Reference proteome</keyword>
<keyword id="KW-0804">Transcription</keyword>
<keyword id="KW-0805">Transcription regulation</keyword>
<protein>
    <recommendedName>
        <fullName>Homeobox protein GBX-1</fullName>
    </recommendedName>
    <alternativeName>
        <fullName>Gastrulation and brain-specific homeobox protein 1</fullName>
    </alternativeName>
</protein>
<proteinExistence type="evidence at transcript level"/>
<evidence type="ECO:0000255" key="1">
    <source>
        <dbReference type="PROSITE-ProRule" id="PRU00108"/>
    </source>
</evidence>
<evidence type="ECO:0000256" key="2">
    <source>
        <dbReference type="SAM" id="MobiDB-lite"/>
    </source>
</evidence>
<evidence type="ECO:0000269" key="3">
    <source>
    </source>
</evidence>
<feature type="chain" id="PRO_0000048879" description="Homeobox protein GBX-1">
    <location>
        <begin position="1"/>
        <end position="418"/>
    </location>
</feature>
<feature type="DNA-binding region" description="Homeobox" evidence="1">
    <location>
        <begin position="316"/>
        <end position="375"/>
    </location>
</feature>
<feature type="region of interest" description="Disordered" evidence="2">
    <location>
        <begin position="1"/>
        <end position="90"/>
    </location>
</feature>
<feature type="region of interest" description="Disordered" evidence="2">
    <location>
        <begin position="214"/>
        <end position="320"/>
    </location>
</feature>
<feature type="compositionally biased region" description="Pro residues" evidence="2">
    <location>
        <begin position="8"/>
        <end position="17"/>
    </location>
</feature>
<feature type="compositionally biased region" description="Gly residues" evidence="2">
    <location>
        <begin position="65"/>
        <end position="81"/>
    </location>
</feature>
<feature type="compositionally biased region" description="Acidic residues" evidence="2">
    <location>
        <begin position="259"/>
        <end position="273"/>
    </location>
</feature>
<feature type="compositionally biased region" description="Low complexity" evidence="2">
    <location>
        <begin position="274"/>
        <end position="294"/>
    </location>
</feature>
<feature type="compositionally biased region" description="Low complexity" evidence="2">
    <location>
        <begin position="302"/>
        <end position="314"/>
    </location>
</feature>
<name>GBX1_MOUSE</name>
<gene>
    <name type="primary">Gbx1</name>
</gene>
<dbReference type="EMBL" id="AF547996">
    <property type="protein sequence ID" value="AAO16238.1"/>
    <property type="molecule type" value="mRNA"/>
</dbReference>
<dbReference type="EMBL" id="AY319256">
    <property type="protein sequence ID" value="AAQ19677.1"/>
    <property type="molecule type" value="mRNA"/>
</dbReference>
<dbReference type="EMBL" id="M81662">
    <property type="protein sequence ID" value="AAA63311.1"/>
    <property type="molecule type" value="Genomic_DNA"/>
</dbReference>
<dbReference type="CCDS" id="CCDS19123.1"/>
<dbReference type="PIR" id="D41606">
    <property type="entry name" value="D41606"/>
</dbReference>
<dbReference type="RefSeq" id="NP_056554.1">
    <property type="nucleotide sequence ID" value="NM_015739.2"/>
</dbReference>
<dbReference type="SMR" id="P82976"/>
<dbReference type="FunCoup" id="P82976">
    <property type="interactions" value="1079"/>
</dbReference>
<dbReference type="STRING" id="10090.ENSMUSP00000085651"/>
<dbReference type="PhosphoSitePlus" id="P82976"/>
<dbReference type="jPOST" id="P82976"/>
<dbReference type="PaxDb" id="10090-ENSMUSP00000085651"/>
<dbReference type="Antibodypedia" id="32984">
    <property type="antibodies" value="117 antibodies from 21 providers"/>
</dbReference>
<dbReference type="DNASU" id="231044"/>
<dbReference type="Ensembl" id="ENSMUST00000088311.6">
    <property type="protein sequence ID" value="ENSMUSP00000085651.5"/>
    <property type="gene ID" value="ENSMUSG00000067724.6"/>
</dbReference>
<dbReference type="GeneID" id="231044"/>
<dbReference type="KEGG" id="mmu:231044"/>
<dbReference type="UCSC" id="uc008wrx.1">
    <property type="organism name" value="mouse"/>
</dbReference>
<dbReference type="AGR" id="MGI:95667"/>
<dbReference type="CTD" id="2636"/>
<dbReference type="MGI" id="MGI:95667">
    <property type="gene designation" value="Gbx1"/>
</dbReference>
<dbReference type="VEuPathDB" id="HostDB:ENSMUSG00000067724"/>
<dbReference type="eggNOG" id="KOG0489">
    <property type="taxonomic scope" value="Eukaryota"/>
</dbReference>
<dbReference type="GeneTree" id="ENSGT00940000154365"/>
<dbReference type="HOGENOM" id="CLU_052189_0_0_1"/>
<dbReference type="InParanoid" id="P82976"/>
<dbReference type="OMA" id="CGPLSQK"/>
<dbReference type="OrthoDB" id="6159439at2759"/>
<dbReference type="PhylomeDB" id="P82976"/>
<dbReference type="TreeFam" id="TF351530"/>
<dbReference type="BioGRID-ORCS" id="231044">
    <property type="hits" value="2 hits in 77 CRISPR screens"/>
</dbReference>
<dbReference type="ChiTaRS" id="Gbx1">
    <property type="organism name" value="mouse"/>
</dbReference>
<dbReference type="PRO" id="PR:P82976"/>
<dbReference type="Proteomes" id="UP000000589">
    <property type="component" value="Chromosome 5"/>
</dbReference>
<dbReference type="RNAct" id="P82976">
    <property type="molecule type" value="protein"/>
</dbReference>
<dbReference type="Bgee" id="ENSMUSG00000067724">
    <property type="expression patterns" value="Expressed in pericardio-peritoneal canal and 35 other cell types or tissues"/>
</dbReference>
<dbReference type="GO" id="GO:0005634">
    <property type="term" value="C:nucleus"/>
    <property type="evidence" value="ECO:0000314"/>
    <property type="project" value="MGI"/>
</dbReference>
<dbReference type="GO" id="GO:0003677">
    <property type="term" value="F:DNA binding"/>
    <property type="evidence" value="ECO:0007669"/>
    <property type="project" value="UniProtKB-KW"/>
</dbReference>
<dbReference type="GO" id="GO:0000981">
    <property type="term" value="F:DNA-binding transcription factor activity, RNA polymerase II-specific"/>
    <property type="evidence" value="ECO:0007669"/>
    <property type="project" value="InterPro"/>
</dbReference>
<dbReference type="GO" id="GO:0007628">
    <property type="term" value="P:adult walking behavior"/>
    <property type="evidence" value="ECO:0000315"/>
    <property type="project" value="MGI"/>
</dbReference>
<dbReference type="GO" id="GO:0048663">
    <property type="term" value="P:neuron fate commitment"/>
    <property type="evidence" value="ECO:0000315"/>
    <property type="project" value="MGI"/>
</dbReference>
<dbReference type="GO" id="GO:0019230">
    <property type="term" value="P:proprioception"/>
    <property type="evidence" value="ECO:0000315"/>
    <property type="project" value="MGI"/>
</dbReference>
<dbReference type="GO" id="GO:0097374">
    <property type="term" value="P:sensory neuron axon guidance"/>
    <property type="evidence" value="ECO:0000315"/>
    <property type="project" value="MGI"/>
</dbReference>
<dbReference type="GO" id="GO:0021522">
    <property type="term" value="P:spinal cord motor neuron differentiation"/>
    <property type="evidence" value="ECO:0000315"/>
    <property type="project" value="MGI"/>
</dbReference>
<dbReference type="CDD" id="cd00086">
    <property type="entry name" value="homeodomain"/>
    <property type="match status" value="1"/>
</dbReference>
<dbReference type="FunFam" id="1.10.10.60:FF:000261">
    <property type="entry name" value="Gastrulation brain homeobox 1"/>
    <property type="match status" value="1"/>
</dbReference>
<dbReference type="Gene3D" id="1.10.10.60">
    <property type="entry name" value="Homeodomain-like"/>
    <property type="match status" value="1"/>
</dbReference>
<dbReference type="InterPro" id="IPR042982">
    <property type="entry name" value="GBX-1/2"/>
</dbReference>
<dbReference type="InterPro" id="IPR001356">
    <property type="entry name" value="HD"/>
</dbReference>
<dbReference type="InterPro" id="IPR020479">
    <property type="entry name" value="HD_metazoa"/>
</dbReference>
<dbReference type="InterPro" id="IPR017970">
    <property type="entry name" value="Homeobox_CS"/>
</dbReference>
<dbReference type="InterPro" id="IPR009057">
    <property type="entry name" value="Homeodomain-like_sf"/>
</dbReference>
<dbReference type="PANTHER" id="PTHR24334">
    <property type="entry name" value="HOMEOBOX PROTEIN GBX"/>
    <property type="match status" value="1"/>
</dbReference>
<dbReference type="PANTHER" id="PTHR24334:SF2">
    <property type="entry name" value="HOMEOBOX PROTEIN GBX-1"/>
    <property type="match status" value="1"/>
</dbReference>
<dbReference type="Pfam" id="PF00046">
    <property type="entry name" value="Homeodomain"/>
    <property type="match status" value="1"/>
</dbReference>
<dbReference type="PRINTS" id="PR00024">
    <property type="entry name" value="HOMEOBOX"/>
</dbReference>
<dbReference type="SMART" id="SM00389">
    <property type="entry name" value="HOX"/>
    <property type="match status" value="1"/>
</dbReference>
<dbReference type="SUPFAM" id="SSF46689">
    <property type="entry name" value="Homeodomain-like"/>
    <property type="match status" value="1"/>
</dbReference>
<dbReference type="PROSITE" id="PS00027">
    <property type="entry name" value="HOMEOBOX_1"/>
    <property type="match status" value="1"/>
</dbReference>
<dbReference type="PROSITE" id="PS50071">
    <property type="entry name" value="HOMEOBOX_2"/>
    <property type="match status" value="1"/>
</dbReference>
<sequence>MSPEGDTPNPPARPLPPYERESAAPEPHCAEPAPRRHLGPRARSEPCVSARGARRGPGSAMQRAAGGGAPGGSGGSSGGPGAAFSIDSLIGPPPPRSGHLLYTGYPMFMPYRPLVLPQALAPAPLPAGLPPLAPLASFAGRLSNTFCAGLGQAVPSMVALTTALPSFAEPPDAYYGPPELAAAAASTASRSNPEPAARRTDGALDAEELLPAREKVTEPPPPPPPHFSETFPSLPAEGKVYSSDEEKLEPPAGDPAGSEQEEEGSGGDSEDSFLDSSAGGPGALLGPKPKLKGSPGTGAEEGTPVATGVTTPGGKSRRRRTAFTSEQLLELEKEFHCKKYLSLTERSQIAHALKLSEVQVKIWFQNRRAKWKRIKAGNVSSRSGEPVRNPKIVVPIPVHVNRFAVRSQHQQMEQGARP</sequence>
<accession>P82976</accession>
<accession>Q8CGW5</accession>
<comment type="subcellular location">
    <subcellularLocation>
        <location evidence="1">Nucleus</location>
    </subcellularLocation>
</comment>
<comment type="tissue specificity">
    <text evidence="3">Expressed in CNS including rhombomeres 3 and 5, optic vesicles, and the medial ganglionic eminence.</text>
</comment>
<comment type="developmental stage">
    <text evidence="3">Expressed first during gastrulation and later in a dynamic pattern in the central nervous system.</text>
</comment>
<organism>
    <name type="scientific">Mus musculus</name>
    <name type="common">Mouse</name>
    <dbReference type="NCBI Taxonomy" id="10090"/>
    <lineage>
        <taxon>Eukaryota</taxon>
        <taxon>Metazoa</taxon>
        <taxon>Chordata</taxon>
        <taxon>Craniata</taxon>
        <taxon>Vertebrata</taxon>
        <taxon>Euteleostomi</taxon>
        <taxon>Mammalia</taxon>
        <taxon>Eutheria</taxon>
        <taxon>Euarchontoglires</taxon>
        <taxon>Glires</taxon>
        <taxon>Rodentia</taxon>
        <taxon>Myomorpha</taxon>
        <taxon>Muroidea</taxon>
        <taxon>Muridae</taxon>
        <taxon>Murinae</taxon>
        <taxon>Mus</taxon>
        <taxon>Mus</taxon>
    </lineage>
</organism>